<evidence type="ECO:0000250" key="1"/>
<evidence type="ECO:0000255" key="2">
    <source>
        <dbReference type="HAMAP-Rule" id="MF_01057"/>
    </source>
</evidence>
<gene>
    <name evidence="2" type="primary">trmB</name>
    <name type="ordered locus">LA_0140</name>
</gene>
<organism>
    <name type="scientific">Leptospira interrogans serogroup Icterohaemorrhagiae serovar Lai (strain 56601)</name>
    <dbReference type="NCBI Taxonomy" id="189518"/>
    <lineage>
        <taxon>Bacteria</taxon>
        <taxon>Pseudomonadati</taxon>
        <taxon>Spirochaetota</taxon>
        <taxon>Spirochaetia</taxon>
        <taxon>Leptospirales</taxon>
        <taxon>Leptospiraceae</taxon>
        <taxon>Leptospira</taxon>
    </lineage>
</organism>
<keyword id="KW-0489">Methyltransferase</keyword>
<keyword id="KW-1185">Reference proteome</keyword>
<keyword id="KW-0949">S-adenosyl-L-methionine</keyword>
<keyword id="KW-0808">Transferase</keyword>
<keyword id="KW-0819">tRNA processing</keyword>
<comment type="function">
    <text evidence="2">Catalyzes the formation of N(7)-methylguanine at position 46 (m7G46) in tRNA.</text>
</comment>
<comment type="catalytic activity">
    <reaction evidence="2">
        <text>guanosine(46) in tRNA + S-adenosyl-L-methionine = N(7)-methylguanosine(46) in tRNA + S-adenosyl-L-homocysteine</text>
        <dbReference type="Rhea" id="RHEA:42708"/>
        <dbReference type="Rhea" id="RHEA-COMP:10188"/>
        <dbReference type="Rhea" id="RHEA-COMP:10189"/>
        <dbReference type="ChEBI" id="CHEBI:57856"/>
        <dbReference type="ChEBI" id="CHEBI:59789"/>
        <dbReference type="ChEBI" id="CHEBI:74269"/>
        <dbReference type="ChEBI" id="CHEBI:74480"/>
        <dbReference type="EC" id="2.1.1.33"/>
    </reaction>
</comment>
<comment type="pathway">
    <text evidence="2">tRNA modification; N(7)-methylguanine-tRNA biosynthesis.</text>
</comment>
<comment type="similarity">
    <text evidence="2">Belongs to the class I-like SAM-binding methyltransferase superfamily. TrmB family.</text>
</comment>
<dbReference type="EC" id="2.1.1.33" evidence="2"/>
<dbReference type="EMBL" id="AE010300">
    <property type="protein sequence ID" value="AAN47339.1"/>
    <property type="molecule type" value="Genomic_DNA"/>
</dbReference>
<dbReference type="RefSeq" id="NP_710321.1">
    <property type="nucleotide sequence ID" value="NC_004342.2"/>
</dbReference>
<dbReference type="RefSeq" id="WP_000249518.1">
    <property type="nucleotide sequence ID" value="NC_004342.2"/>
</dbReference>
<dbReference type="SMR" id="Q8F9Q1"/>
<dbReference type="FunCoup" id="Q8F9Q1">
    <property type="interactions" value="304"/>
</dbReference>
<dbReference type="STRING" id="189518.LA_0140"/>
<dbReference type="PaxDb" id="189518-LA_0140"/>
<dbReference type="EnsemblBacteria" id="AAN47339">
    <property type="protein sequence ID" value="AAN47339"/>
    <property type="gene ID" value="LA_0140"/>
</dbReference>
<dbReference type="KEGG" id="lil:LA_0140"/>
<dbReference type="PATRIC" id="fig|189518.3.peg.143"/>
<dbReference type="HOGENOM" id="CLU_050910_2_0_12"/>
<dbReference type="InParanoid" id="Q8F9Q1"/>
<dbReference type="OrthoDB" id="9802090at2"/>
<dbReference type="UniPathway" id="UPA00989"/>
<dbReference type="Proteomes" id="UP000001408">
    <property type="component" value="Chromosome I"/>
</dbReference>
<dbReference type="GO" id="GO:0043527">
    <property type="term" value="C:tRNA methyltransferase complex"/>
    <property type="evidence" value="ECO:0000318"/>
    <property type="project" value="GO_Central"/>
</dbReference>
<dbReference type="GO" id="GO:0008176">
    <property type="term" value="F:tRNA (guanine(46)-N7)-methyltransferase activity"/>
    <property type="evidence" value="ECO:0000318"/>
    <property type="project" value="GO_Central"/>
</dbReference>
<dbReference type="GO" id="GO:0036265">
    <property type="term" value="P:RNA (guanine-N7)-methylation"/>
    <property type="evidence" value="ECO:0000318"/>
    <property type="project" value="GO_Central"/>
</dbReference>
<dbReference type="GO" id="GO:0030488">
    <property type="term" value="P:tRNA methylation"/>
    <property type="evidence" value="ECO:0000318"/>
    <property type="project" value="GO_Central"/>
</dbReference>
<dbReference type="CDD" id="cd02440">
    <property type="entry name" value="AdoMet_MTases"/>
    <property type="match status" value="1"/>
</dbReference>
<dbReference type="FunFam" id="3.40.50.150:FF:000446">
    <property type="entry name" value="tRNA (guanine-N(7)-)-methyltransferase"/>
    <property type="match status" value="1"/>
</dbReference>
<dbReference type="Gene3D" id="3.40.50.150">
    <property type="entry name" value="Vaccinia Virus protein VP39"/>
    <property type="match status" value="1"/>
</dbReference>
<dbReference type="HAMAP" id="MF_01057">
    <property type="entry name" value="tRNA_methyltr_TrmB"/>
    <property type="match status" value="1"/>
</dbReference>
<dbReference type="InterPro" id="IPR029063">
    <property type="entry name" value="SAM-dependent_MTases_sf"/>
</dbReference>
<dbReference type="InterPro" id="IPR003358">
    <property type="entry name" value="tRNA_(Gua-N-7)_MeTrfase_Trmb"/>
</dbReference>
<dbReference type="InterPro" id="IPR055361">
    <property type="entry name" value="tRNA_methyltr_TrmB_bact"/>
</dbReference>
<dbReference type="NCBIfam" id="TIGR00091">
    <property type="entry name" value="tRNA (guanosine(46)-N7)-methyltransferase TrmB"/>
    <property type="match status" value="1"/>
</dbReference>
<dbReference type="PANTHER" id="PTHR23417">
    <property type="entry name" value="3-DEOXY-D-MANNO-OCTULOSONIC-ACID TRANSFERASE/TRNA GUANINE-N 7 - -METHYLTRANSFERASE"/>
    <property type="match status" value="1"/>
</dbReference>
<dbReference type="PANTHER" id="PTHR23417:SF14">
    <property type="entry name" value="PENTACOTRIPEPTIDE-REPEAT REGION OF PRORP DOMAIN-CONTAINING PROTEIN"/>
    <property type="match status" value="1"/>
</dbReference>
<dbReference type="Pfam" id="PF02390">
    <property type="entry name" value="Methyltransf_4"/>
    <property type="match status" value="1"/>
</dbReference>
<dbReference type="SUPFAM" id="SSF53335">
    <property type="entry name" value="S-adenosyl-L-methionine-dependent methyltransferases"/>
    <property type="match status" value="1"/>
</dbReference>
<dbReference type="PROSITE" id="PS51625">
    <property type="entry name" value="SAM_MT_TRMB"/>
    <property type="match status" value="1"/>
</dbReference>
<proteinExistence type="inferred from homology"/>
<accession>Q8F9Q1</accession>
<protein>
    <recommendedName>
        <fullName evidence="2">tRNA (guanine-N(7)-)-methyltransferase</fullName>
        <ecNumber evidence="2">2.1.1.33</ecNumber>
    </recommendedName>
    <alternativeName>
        <fullName evidence="2">tRNA (guanine(46)-N(7))-methyltransferase</fullName>
    </alternativeName>
    <alternativeName>
        <fullName evidence="2">tRNA(m7G46)-methyltransferase</fullName>
    </alternativeName>
</protein>
<reference key="1">
    <citation type="journal article" date="2003" name="Nature">
        <title>Unique physiological and pathogenic features of Leptospira interrogans revealed by whole-genome sequencing.</title>
        <authorList>
            <person name="Ren S.-X."/>
            <person name="Fu G."/>
            <person name="Jiang X.-G."/>
            <person name="Zeng R."/>
            <person name="Miao Y.-G."/>
            <person name="Xu H."/>
            <person name="Zhang Y.-X."/>
            <person name="Xiong H."/>
            <person name="Lu G."/>
            <person name="Lu L.-F."/>
            <person name="Jiang H.-Q."/>
            <person name="Jia J."/>
            <person name="Tu Y.-F."/>
            <person name="Jiang J.-X."/>
            <person name="Gu W.-Y."/>
            <person name="Zhang Y.-Q."/>
            <person name="Cai Z."/>
            <person name="Sheng H.-H."/>
            <person name="Yin H.-F."/>
            <person name="Zhang Y."/>
            <person name="Zhu G.-F."/>
            <person name="Wan M."/>
            <person name="Huang H.-L."/>
            <person name="Qian Z."/>
            <person name="Wang S.-Y."/>
            <person name="Ma W."/>
            <person name="Yao Z.-J."/>
            <person name="Shen Y."/>
            <person name="Qiang B.-Q."/>
            <person name="Xia Q.-C."/>
            <person name="Guo X.-K."/>
            <person name="Danchin A."/>
            <person name="Saint Girons I."/>
            <person name="Somerville R.L."/>
            <person name="Wen Y.-M."/>
            <person name="Shi M.-H."/>
            <person name="Chen Z."/>
            <person name="Xu J.-G."/>
            <person name="Zhao G.-P."/>
        </authorList>
    </citation>
    <scope>NUCLEOTIDE SEQUENCE [LARGE SCALE GENOMIC DNA]</scope>
    <source>
        <strain>56601</strain>
    </source>
</reference>
<sequence>MVQDLEQKLWSIASGIPFSSDYFLQASPIRKLKKENLFSKVFETYFLELGSGWGEVAISMALQRPNTGFILMEKKFDRIRHTIREIEKHSLDNVKILCVNFNWFLEEVFEENLFSEILLNFPDPWPKKRHHKKRTVNSKFLESLKILLPEKGKFYFATDYGPYARKVIRLFRDSKAFSPEKVELKSERNEIPVSHFERKKREEGKRIYYIDRVLVQK</sequence>
<feature type="chain" id="PRO_0000171342" description="tRNA (guanine-N(7)-)-methyltransferase">
    <location>
        <begin position="1"/>
        <end position="217"/>
    </location>
</feature>
<feature type="active site" evidence="1">
    <location>
        <position position="123"/>
    </location>
</feature>
<feature type="binding site" evidence="2">
    <location>
        <position position="48"/>
    </location>
    <ligand>
        <name>S-adenosyl-L-methionine</name>
        <dbReference type="ChEBI" id="CHEBI:59789"/>
    </ligand>
</feature>
<feature type="binding site" evidence="2">
    <location>
        <position position="73"/>
    </location>
    <ligand>
        <name>S-adenosyl-L-methionine</name>
        <dbReference type="ChEBI" id="CHEBI:59789"/>
    </ligand>
</feature>
<feature type="binding site" evidence="2">
    <location>
        <position position="100"/>
    </location>
    <ligand>
        <name>S-adenosyl-L-methionine</name>
        <dbReference type="ChEBI" id="CHEBI:59789"/>
    </ligand>
</feature>
<feature type="binding site" evidence="2">
    <location>
        <position position="123"/>
    </location>
    <ligand>
        <name>S-adenosyl-L-methionine</name>
        <dbReference type="ChEBI" id="CHEBI:59789"/>
    </ligand>
</feature>
<feature type="binding site" evidence="2">
    <location>
        <position position="127"/>
    </location>
    <ligand>
        <name>substrate</name>
    </ligand>
</feature>
<feature type="binding site" evidence="2">
    <location>
        <position position="159"/>
    </location>
    <ligand>
        <name>substrate</name>
    </ligand>
</feature>
<name>TRMB_LEPIN</name>